<evidence type="ECO:0000255" key="1">
    <source>
        <dbReference type="HAMAP-Rule" id="MF_01007"/>
    </source>
</evidence>
<evidence type="ECO:0000256" key="2">
    <source>
        <dbReference type="SAM" id="MobiDB-lite"/>
    </source>
</evidence>
<dbReference type="EC" id="2.1.1.199" evidence="1"/>
<dbReference type="EMBL" id="CP000462">
    <property type="protein sequence ID" value="ABK38899.1"/>
    <property type="molecule type" value="Genomic_DNA"/>
</dbReference>
<dbReference type="RefSeq" id="WP_011707587.1">
    <property type="nucleotide sequence ID" value="NC_008570.1"/>
</dbReference>
<dbReference type="RefSeq" id="YP_858331.1">
    <property type="nucleotide sequence ID" value="NC_008570.1"/>
</dbReference>
<dbReference type="SMR" id="A0KPY0"/>
<dbReference type="STRING" id="380703.AHA_3892"/>
<dbReference type="EnsemblBacteria" id="ABK38899">
    <property type="protein sequence ID" value="ABK38899"/>
    <property type="gene ID" value="AHA_3892"/>
</dbReference>
<dbReference type="GeneID" id="4488204"/>
<dbReference type="KEGG" id="aha:AHA_3892"/>
<dbReference type="PATRIC" id="fig|380703.7.peg.3862"/>
<dbReference type="eggNOG" id="COG0275">
    <property type="taxonomic scope" value="Bacteria"/>
</dbReference>
<dbReference type="HOGENOM" id="CLU_038422_2_0_6"/>
<dbReference type="OrthoDB" id="9806637at2"/>
<dbReference type="Proteomes" id="UP000000756">
    <property type="component" value="Chromosome"/>
</dbReference>
<dbReference type="GO" id="GO:0005737">
    <property type="term" value="C:cytoplasm"/>
    <property type="evidence" value="ECO:0007669"/>
    <property type="project" value="UniProtKB-SubCell"/>
</dbReference>
<dbReference type="GO" id="GO:0071424">
    <property type="term" value="F:rRNA (cytosine-N4-)-methyltransferase activity"/>
    <property type="evidence" value="ECO:0007669"/>
    <property type="project" value="UniProtKB-UniRule"/>
</dbReference>
<dbReference type="GO" id="GO:0070475">
    <property type="term" value="P:rRNA base methylation"/>
    <property type="evidence" value="ECO:0007669"/>
    <property type="project" value="UniProtKB-UniRule"/>
</dbReference>
<dbReference type="FunFam" id="1.10.150.170:FF:000001">
    <property type="entry name" value="Ribosomal RNA small subunit methyltransferase H"/>
    <property type="match status" value="1"/>
</dbReference>
<dbReference type="Gene3D" id="1.10.150.170">
    <property type="entry name" value="Putative methyltransferase TM0872, insert domain"/>
    <property type="match status" value="1"/>
</dbReference>
<dbReference type="Gene3D" id="3.40.50.150">
    <property type="entry name" value="Vaccinia Virus protein VP39"/>
    <property type="match status" value="1"/>
</dbReference>
<dbReference type="HAMAP" id="MF_01007">
    <property type="entry name" value="16SrRNA_methyltr_H"/>
    <property type="match status" value="1"/>
</dbReference>
<dbReference type="InterPro" id="IPR002903">
    <property type="entry name" value="RsmH"/>
</dbReference>
<dbReference type="InterPro" id="IPR023397">
    <property type="entry name" value="SAM-dep_MeTrfase_MraW_recog"/>
</dbReference>
<dbReference type="InterPro" id="IPR029063">
    <property type="entry name" value="SAM-dependent_MTases_sf"/>
</dbReference>
<dbReference type="NCBIfam" id="TIGR00006">
    <property type="entry name" value="16S rRNA (cytosine(1402)-N(4))-methyltransferase RsmH"/>
    <property type="match status" value="1"/>
</dbReference>
<dbReference type="PANTHER" id="PTHR11265:SF0">
    <property type="entry name" value="12S RRNA N4-METHYLCYTIDINE METHYLTRANSFERASE"/>
    <property type="match status" value="1"/>
</dbReference>
<dbReference type="PANTHER" id="PTHR11265">
    <property type="entry name" value="S-ADENOSYL-METHYLTRANSFERASE MRAW"/>
    <property type="match status" value="1"/>
</dbReference>
<dbReference type="Pfam" id="PF01795">
    <property type="entry name" value="Methyltransf_5"/>
    <property type="match status" value="1"/>
</dbReference>
<dbReference type="PIRSF" id="PIRSF004486">
    <property type="entry name" value="MraW"/>
    <property type="match status" value="1"/>
</dbReference>
<dbReference type="SUPFAM" id="SSF81799">
    <property type="entry name" value="Putative methyltransferase TM0872, insert domain"/>
    <property type="match status" value="1"/>
</dbReference>
<dbReference type="SUPFAM" id="SSF53335">
    <property type="entry name" value="S-adenosyl-L-methionine-dependent methyltransferases"/>
    <property type="match status" value="1"/>
</dbReference>
<reference key="1">
    <citation type="journal article" date="2006" name="J. Bacteriol.">
        <title>Genome sequence of Aeromonas hydrophila ATCC 7966T: jack of all trades.</title>
        <authorList>
            <person name="Seshadri R."/>
            <person name="Joseph S.W."/>
            <person name="Chopra A.K."/>
            <person name="Sha J."/>
            <person name="Shaw J."/>
            <person name="Graf J."/>
            <person name="Haft D.H."/>
            <person name="Wu M."/>
            <person name="Ren Q."/>
            <person name="Rosovitz M.J."/>
            <person name="Madupu R."/>
            <person name="Tallon L."/>
            <person name="Kim M."/>
            <person name="Jin S."/>
            <person name="Vuong H."/>
            <person name="Stine O.C."/>
            <person name="Ali A."/>
            <person name="Horneman A.J."/>
            <person name="Heidelberg J.F."/>
        </authorList>
    </citation>
    <scope>NUCLEOTIDE SEQUENCE [LARGE SCALE GENOMIC DNA]</scope>
    <source>
        <strain>ATCC 7966 / DSM 30187 / BCRC 13018 / CCUG 14551 / JCM 1027 / KCTC 2358 / NCIMB 9240 / NCTC 8049</strain>
    </source>
</reference>
<sequence length="312" mass="34381">MTQAAEHITVLLHEAVEGLAIKPDGIYVDGTFGRGGHSRLILQQLGPNGRLIAIDRDPQAIAEAAKIQDPRFEIVHGPFSGIASYLDERGLLGKVDGFLLDLGVSSPQLDDAERGFSFMKDGPLDMRMDPTSGQSAAEWLARADVDDIAWVLKTFGEERFAKKIARAIVHDRVTEPYVRTRQLAEMIARVNPSKEKGKHAATRSFQAIRIYINSELDEIETALNGALQVLAPEGRLSVISFHSLEDRLVKHFIRKHEKGPEVPHGIPLTEAQLAGGRKLKSVGKALKPSEHEVNENSRSRSSVLRVAQRLAE</sequence>
<accession>A0KPY0</accession>
<name>RSMH_AERHH</name>
<organism>
    <name type="scientific">Aeromonas hydrophila subsp. hydrophila (strain ATCC 7966 / DSM 30187 / BCRC 13018 / CCUG 14551 / JCM 1027 / KCTC 2358 / NCIMB 9240 / NCTC 8049)</name>
    <dbReference type="NCBI Taxonomy" id="380703"/>
    <lineage>
        <taxon>Bacteria</taxon>
        <taxon>Pseudomonadati</taxon>
        <taxon>Pseudomonadota</taxon>
        <taxon>Gammaproteobacteria</taxon>
        <taxon>Aeromonadales</taxon>
        <taxon>Aeromonadaceae</taxon>
        <taxon>Aeromonas</taxon>
    </lineage>
</organism>
<comment type="function">
    <text evidence="1">Specifically methylates the N4 position of cytidine in position 1402 (C1402) of 16S rRNA.</text>
</comment>
<comment type="catalytic activity">
    <reaction evidence="1">
        <text>cytidine(1402) in 16S rRNA + S-adenosyl-L-methionine = N(4)-methylcytidine(1402) in 16S rRNA + S-adenosyl-L-homocysteine + H(+)</text>
        <dbReference type="Rhea" id="RHEA:42928"/>
        <dbReference type="Rhea" id="RHEA-COMP:10286"/>
        <dbReference type="Rhea" id="RHEA-COMP:10287"/>
        <dbReference type="ChEBI" id="CHEBI:15378"/>
        <dbReference type="ChEBI" id="CHEBI:57856"/>
        <dbReference type="ChEBI" id="CHEBI:59789"/>
        <dbReference type="ChEBI" id="CHEBI:74506"/>
        <dbReference type="ChEBI" id="CHEBI:82748"/>
        <dbReference type="EC" id="2.1.1.199"/>
    </reaction>
</comment>
<comment type="subcellular location">
    <subcellularLocation>
        <location evidence="1">Cytoplasm</location>
    </subcellularLocation>
</comment>
<comment type="similarity">
    <text evidence="1">Belongs to the methyltransferase superfamily. RsmH family.</text>
</comment>
<protein>
    <recommendedName>
        <fullName evidence="1">Ribosomal RNA small subunit methyltransferase H</fullName>
        <ecNumber evidence="1">2.1.1.199</ecNumber>
    </recommendedName>
    <alternativeName>
        <fullName evidence="1">16S rRNA m(4)C1402 methyltransferase</fullName>
    </alternativeName>
    <alternativeName>
        <fullName evidence="1">rRNA (cytosine-N(4)-)-methyltransferase RsmH</fullName>
    </alternativeName>
</protein>
<gene>
    <name evidence="1" type="primary">rsmH</name>
    <name type="synonym">mraW</name>
    <name type="ordered locus">AHA_3892</name>
</gene>
<proteinExistence type="inferred from homology"/>
<feature type="chain" id="PRO_0000386698" description="Ribosomal RNA small subunit methyltransferase H">
    <location>
        <begin position="1"/>
        <end position="312"/>
    </location>
</feature>
<feature type="region of interest" description="Disordered" evidence="2">
    <location>
        <begin position="286"/>
        <end position="306"/>
    </location>
</feature>
<feature type="compositionally biased region" description="Basic and acidic residues" evidence="2">
    <location>
        <begin position="287"/>
        <end position="298"/>
    </location>
</feature>
<feature type="binding site" evidence="1">
    <location>
        <begin position="35"/>
        <end position="37"/>
    </location>
    <ligand>
        <name>S-adenosyl-L-methionine</name>
        <dbReference type="ChEBI" id="CHEBI:59789"/>
    </ligand>
</feature>
<feature type="binding site" evidence="1">
    <location>
        <position position="55"/>
    </location>
    <ligand>
        <name>S-adenosyl-L-methionine</name>
        <dbReference type="ChEBI" id="CHEBI:59789"/>
    </ligand>
</feature>
<feature type="binding site" evidence="1">
    <location>
        <position position="79"/>
    </location>
    <ligand>
        <name>S-adenosyl-L-methionine</name>
        <dbReference type="ChEBI" id="CHEBI:59789"/>
    </ligand>
</feature>
<feature type="binding site" evidence="1">
    <location>
        <position position="101"/>
    </location>
    <ligand>
        <name>S-adenosyl-L-methionine</name>
        <dbReference type="ChEBI" id="CHEBI:59789"/>
    </ligand>
</feature>
<feature type="binding site" evidence="1">
    <location>
        <position position="108"/>
    </location>
    <ligand>
        <name>S-adenosyl-L-methionine</name>
        <dbReference type="ChEBI" id="CHEBI:59789"/>
    </ligand>
</feature>
<keyword id="KW-0963">Cytoplasm</keyword>
<keyword id="KW-0489">Methyltransferase</keyword>
<keyword id="KW-1185">Reference proteome</keyword>
<keyword id="KW-0698">rRNA processing</keyword>
<keyword id="KW-0949">S-adenosyl-L-methionine</keyword>
<keyword id="KW-0808">Transferase</keyword>